<sequence>MPAIEVGRIAVIIAGRRAGQKVVVVDVIDKNFVLVTGAGLNKVKRRRMNVKHLEPLPERVNIERGADDEAVKAALEQAGISLE</sequence>
<organism>
    <name type="scientific">Thermococcus onnurineus (strain NA1)</name>
    <dbReference type="NCBI Taxonomy" id="523850"/>
    <lineage>
        <taxon>Archaea</taxon>
        <taxon>Methanobacteriati</taxon>
        <taxon>Methanobacteriota</taxon>
        <taxon>Thermococci</taxon>
        <taxon>Thermococcales</taxon>
        <taxon>Thermococcaceae</taxon>
        <taxon>Thermococcus</taxon>
    </lineage>
</organism>
<name>RL14E_THEON</name>
<keyword id="KW-0687">Ribonucleoprotein</keyword>
<keyword id="KW-0689">Ribosomal protein</keyword>
<proteinExistence type="inferred from homology"/>
<accession>B6YSP2</accession>
<evidence type="ECO:0000255" key="1">
    <source>
        <dbReference type="HAMAP-Rule" id="MF_00721"/>
    </source>
</evidence>
<evidence type="ECO:0000305" key="2"/>
<comment type="similarity">
    <text evidence="1">Belongs to the eukaryotic ribosomal protein eL14 family.</text>
</comment>
<feature type="chain" id="PRO_1000132639" description="Large ribosomal subunit protein eL14">
    <location>
        <begin position="1"/>
        <end position="83"/>
    </location>
</feature>
<gene>
    <name evidence="1" type="primary">rpl14e</name>
    <name type="ordered locus">TON_0094</name>
</gene>
<protein>
    <recommendedName>
        <fullName evidence="1">Large ribosomal subunit protein eL14</fullName>
    </recommendedName>
    <alternativeName>
        <fullName evidence="2">50S ribosomal protein L14e</fullName>
    </alternativeName>
</protein>
<dbReference type="EMBL" id="CP000855">
    <property type="protein sequence ID" value="ACJ15579.1"/>
    <property type="molecule type" value="Genomic_DNA"/>
</dbReference>
<dbReference type="RefSeq" id="WP_012571052.1">
    <property type="nucleotide sequence ID" value="NC_011529.1"/>
</dbReference>
<dbReference type="SMR" id="B6YSP2"/>
<dbReference type="STRING" id="523850.TON_0094"/>
<dbReference type="GeneID" id="7017741"/>
<dbReference type="KEGG" id="ton:TON_0094"/>
<dbReference type="PATRIC" id="fig|523850.10.peg.94"/>
<dbReference type="eggNOG" id="arCOG04167">
    <property type="taxonomic scope" value="Archaea"/>
</dbReference>
<dbReference type="HOGENOM" id="CLU_183474_0_0_2"/>
<dbReference type="OrthoDB" id="63594at2157"/>
<dbReference type="Proteomes" id="UP000002727">
    <property type="component" value="Chromosome"/>
</dbReference>
<dbReference type="GO" id="GO:0022625">
    <property type="term" value="C:cytosolic large ribosomal subunit"/>
    <property type="evidence" value="ECO:0007669"/>
    <property type="project" value="TreeGrafter"/>
</dbReference>
<dbReference type="GO" id="GO:0003723">
    <property type="term" value="F:RNA binding"/>
    <property type="evidence" value="ECO:0007669"/>
    <property type="project" value="InterPro"/>
</dbReference>
<dbReference type="GO" id="GO:0003735">
    <property type="term" value="F:structural constituent of ribosome"/>
    <property type="evidence" value="ECO:0007669"/>
    <property type="project" value="InterPro"/>
</dbReference>
<dbReference type="GO" id="GO:0042273">
    <property type="term" value="P:ribosomal large subunit biogenesis"/>
    <property type="evidence" value="ECO:0007669"/>
    <property type="project" value="TreeGrafter"/>
</dbReference>
<dbReference type="GO" id="GO:0006412">
    <property type="term" value="P:translation"/>
    <property type="evidence" value="ECO:0007669"/>
    <property type="project" value="UniProtKB-UniRule"/>
</dbReference>
<dbReference type="CDD" id="cd06088">
    <property type="entry name" value="KOW_RPL14"/>
    <property type="match status" value="1"/>
</dbReference>
<dbReference type="FunFam" id="2.30.30.30:FF:000045">
    <property type="entry name" value="50S ribosomal protein L14e"/>
    <property type="match status" value="1"/>
</dbReference>
<dbReference type="Gene3D" id="2.30.30.30">
    <property type="match status" value="1"/>
</dbReference>
<dbReference type="HAMAP" id="MF_00721">
    <property type="entry name" value="Ribosomal_eL14"/>
    <property type="match status" value="1"/>
</dbReference>
<dbReference type="InterPro" id="IPR005824">
    <property type="entry name" value="KOW"/>
</dbReference>
<dbReference type="InterPro" id="IPR014722">
    <property type="entry name" value="Rib_uL2_dom2"/>
</dbReference>
<dbReference type="InterPro" id="IPR039660">
    <property type="entry name" value="Ribosomal_eL14"/>
</dbReference>
<dbReference type="InterPro" id="IPR023651">
    <property type="entry name" value="Ribosomal_eL14_arc"/>
</dbReference>
<dbReference type="InterPro" id="IPR041985">
    <property type="entry name" value="Ribosomal_eL14_KOW"/>
</dbReference>
<dbReference type="InterPro" id="IPR008991">
    <property type="entry name" value="Translation_prot_SH3-like_sf"/>
</dbReference>
<dbReference type="NCBIfam" id="NF003320">
    <property type="entry name" value="PRK04333.1"/>
    <property type="match status" value="1"/>
</dbReference>
<dbReference type="PANTHER" id="PTHR11127">
    <property type="entry name" value="60S RIBOSOMAL PROTEIN L14"/>
    <property type="match status" value="1"/>
</dbReference>
<dbReference type="PANTHER" id="PTHR11127:SF2">
    <property type="entry name" value="LARGE RIBOSOMAL SUBUNIT PROTEIN EL14"/>
    <property type="match status" value="1"/>
</dbReference>
<dbReference type="Pfam" id="PF00467">
    <property type="entry name" value="KOW"/>
    <property type="match status" value="1"/>
</dbReference>
<dbReference type="SUPFAM" id="SSF50104">
    <property type="entry name" value="Translation proteins SH3-like domain"/>
    <property type="match status" value="1"/>
</dbReference>
<reference key="1">
    <citation type="journal article" date="2008" name="J. Bacteriol.">
        <title>The complete genome sequence of Thermococcus onnurineus NA1 reveals a mixed heterotrophic and carboxydotrophic metabolism.</title>
        <authorList>
            <person name="Lee H.S."/>
            <person name="Kang S.G."/>
            <person name="Bae S.S."/>
            <person name="Lim J.K."/>
            <person name="Cho Y."/>
            <person name="Kim Y.J."/>
            <person name="Jeon J.H."/>
            <person name="Cha S.-S."/>
            <person name="Kwon K.K."/>
            <person name="Kim H.-T."/>
            <person name="Park C.-J."/>
            <person name="Lee H.-W."/>
            <person name="Kim S.I."/>
            <person name="Chun J."/>
            <person name="Colwell R.R."/>
            <person name="Kim S.-J."/>
            <person name="Lee J.-H."/>
        </authorList>
    </citation>
    <scope>NUCLEOTIDE SEQUENCE [LARGE SCALE GENOMIC DNA]</scope>
    <source>
        <strain>NA1</strain>
    </source>
</reference>